<dbReference type="EC" id="3.6.5.-" evidence="33"/>
<dbReference type="EMBL" id="X03558">
    <property type="protein sequence ID" value="CAA27245.1"/>
    <property type="molecule type" value="mRNA"/>
</dbReference>
<dbReference type="EMBL" id="J04617">
    <property type="protein sequence ID" value="AAA52343.1"/>
    <property type="molecule type" value="Genomic_DNA"/>
</dbReference>
<dbReference type="EMBL" id="X16869">
    <property type="protein sequence ID" value="CAA34756.1"/>
    <property type="molecule type" value="mRNA"/>
</dbReference>
<dbReference type="EMBL" id="AY043301">
    <property type="protein sequence ID" value="AAK95378.1"/>
    <property type="molecule type" value="mRNA"/>
</dbReference>
<dbReference type="EMBL" id="BC008587">
    <property type="protein sequence ID" value="AAH08587.1"/>
    <property type="molecule type" value="mRNA"/>
</dbReference>
<dbReference type="EMBL" id="BC009733">
    <property type="protein sequence ID" value="AAH09733.1"/>
    <property type="molecule type" value="mRNA"/>
</dbReference>
<dbReference type="EMBL" id="BC009875">
    <property type="protein sequence ID" value="AAH09875.1"/>
    <property type="molecule type" value="mRNA"/>
</dbReference>
<dbReference type="EMBL" id="BC010735">
    <property type="protein sequence ID" value="AAH10735.1"/>
    <property type="molecule type" value="mRNA"/>
</dbReference>
<dbReference type="EMBL" id="BC012891">
    <property type="protein sequence ID" value="AAH12891.1"/>
    <property type="molecule type" value="mRNA"/>
</dbReference>
<dbReference type="EMBL" id="BC014224">
    <property type="protein sequence ID" value="AAH14224.1"/>
    <property type="molecule type" value="mRNA"/>
</dbReference>
<dbReference type="EMBL" id="BC018150">
    <property type="protein sequence ID" value="AAH18150.1"/>
    <property type="molecule type" value="mRNA"/>
</dbReference>
<dbReference type="EMBL" id="BC018641">
    <property type="protein sequence ID" value="AAH18641.1"/>
    <property type="molecule type" value="mRNA"/>
</dbReference>
<dbReference type="EMBL" id="BC021686">
    <property type="protein sequence ID" value="AAH21686.1"/>
    <property type="molecule type" value="mRNA"/>
</dbReference>
<dbReference type="EMBL" id="BC028674">
    <property type="protein sequence ID" value="AAH28674.1"/>
    <property type="molecule type" value="mRNA"/>
</dbReference>
<dbReference type="EMBL" id="BC038339">
    <property type="protein sequence ID" value="AAH38339.1"/>
    <property type="molecule type" value="mRNA"/>
</dbReference>
<dbReference type="EMBL" id="BC057391">
    <property type="protein sequence ID" value="AAH57391.1"/>
    <property type="molecule type" value="mRNA"/>
</dbReference>
<dbReference type="EMBL" id="BC066893">
    <property type="protein sequence ID" value="AAH66893.1"/>
    <property type="molecule type" value="mRNA"/>
</dbReference>
<dbReference type="EMBL" id="BC071619">
    <property type="protein sequence ID" value="AAH71619.1"/>
    <property type="status" value="ALT_SEQ"/>
    <property type="molecule type" value="mRNA"/>
</dbReference>
<dbReference type="EMBL" id="BC072385">
    <property type="protein sequence ID" value="AAH72385.1"/>
    <property type="molecule type" value="mRNA"/>
</dbReference>
<dbReference type="EMBL" id="BC082268">
    <property type="protein sequence ID" value="AAH82268.1"/>
    <property type="molecule type" value="mRNA"/>
</dbReference>
<dbReference type="EMBL" id="X03689">
    <property type="protein sequence ID" value="CAA27325.1"/>
    <property type="molecule type" value="mRNA"/>
</dbReference>
<dbReference type="EMBL" id="M29548">
    <property type="protein sequence ID" value="AAA52367.1"/>
    <property type="status" value="ALT_INIT"/>
    <property type="molecule type" value="mRNA"/>
</dbReference>
<dbReference type="CCDS" id="CCDS4980.1"/>
<dbReference type="PIR" id="B24977">
    <property type="entry name" value="EFHU1"/>
</dbReference>
<dbReference type="RefSeq" id="NP_001393.1">
    <property type="nucleotide sequence ID" value="NM_001402.6"/>
</dbReference>
<dbReference type="RefSeq" id="XP_011533816.1">
    <property type="nucleotide sequence ID" value="XM_011535514.2"/>
</dbReference>
<dbReference type="RefSeq" id="XP_054210402.1">
    <property type="nucleotide sequence ID" value="XM_054354427.1"/>
</dbReference>
<dbReference type="PDB" id="3C5J">
    <property type="method" value="X-ray"/>
    <property type="resolution" value="1.80 A"/>
    <property type="chains" value="C=343-355"/>
</dbReference>
<dbReference type="PDB" id="6ZMO">
    <property type="method" value="EM"/>
    <property type="resolution" value="3.10 A"/>
    <property type="chains" value="CD=1-462"/>
</dbReference>
<dbReference type="PDB" id="8G60">
    <property type="method" value="EM"/>
    <property type="resolution" value="2.54 A"/>
    <property type="chains" value="EF=1-462"/>
</dbReference>
<dbReference type="PDB" id="8G6J">
    <property type="method" value="EM"/>
    <property type="resolution" value="2.80 A"/>
    <property type="chains" value="EF=1-462"/>
</dbReference>
<dbReference type="PDBsum" id="3C5J"/>
<dbReference type="PDBsum" id="6ZMO"/>
<dbReference type="PDBsum" id="8G60"/>
<dbReference type="PDBsum" id="8G6J"/>
<dbReference type="EMDB" id="EMD-11299"/>
<dbReference type="EMDB" id="EMD-29759"/>
<dbReference type="EMDB" id="EMD-29771"/>
<dbReference type="SMR" id="P68104"/>
<dbReference type="BioGRID" id="108237">
    <property type="interactions" value="768"/>
</dbReference>
<dbReference type="CORUM" id="P68104"/>
<dbReference type="DIP" id="DIP-31277N"/>
<dbReference type="FunCoup" id="P68104">
    <property type="interactions" value="2149"/>
</dbReference>
<dbReference type="IntAct" id="P68104">
    <property type="interactions" value="276"/>
</dbReference>
<dbReference type="MINT" id="P68104"/>
<dbReference type="STRING" id="9606.ENSP00000339063"/>
<dbReference type="BindingDB" id="P68104"/>
<dbReference type="ChEMBL" id="CHEMBL1795120"/>
<dbReference type="DrugBank" id="DB11638">
    <property type="generic name" value="Artenimol"/>
</dbReference>
<dbReference type="DrugBank" id="DB09130">
    <property type="generic name" value="Copper"/>
</dbReference>
<dbReference type="DrugBank" id="DB04315">
    <property type="generic name" value="Guanosine-5'-Diphosphate"/>
</dbReference>
<dbReference type="DrugBank" id="DB01593">
    <property type="generic name" value="Zinc"/>
</dbReference>
<dbReference type="DrugBank" id="DB14487">
    <property type="generic name" value="Zinc acetate"/>
</dbReference>
<dbReference type="DrugBank" id="DB14533">
    <property type="generic name" value="Zinc chloride"/>
</dbReference>
<dbReference type="DrugBank" id="DB14548">
    <property type="generic name" value="Zinc sulfate, unspecified form"/>
</dbReference>
<dbReference type="MoonProt" id="P68104"/>
<dbReference type="GlyGen" id="P68104">
    <property type="glycosylation" value="7 sites, 6 N-linked glycans (2 sites), 1 O-linked glycan (5 sites)"/>
</dbReference>
<dbReference type="iPTMnet" id="P68104"/>
<dbReference type="MetOSite" id="P68104"/>
<dbReference type="PhosphoSitePlus" id="P68104"/>
<dbReference type="SwissPalm" id="P68104"/>
<dbReference type="BioMuta" id="EEF1A1"/>
<dbReference type="DMDM" id="55584035"/>
<dbReference type="OGP" id="P68104"/>
<dbReference type="jPOST" id="P68104"/>
<dbReference type="MassIVE" id="P68104"/>
<dbReference type="PaxDb" id="9606-ENSP00000339063"/>
<dbReference type="PeptideAtlas" id="P68104"/>
<dbReference type="PRIDE" id="P68104"/>
<dbReference type="ProteomicsDB" id="66470"/>
<dbReference type="Pumba" id="P68104"/>
<dbReference type="TopDownProteomics" id="P68104"/>
<dbReference type="ABCD" id="P68104">
    <property type="antibodies" value="1 sequenced antibody"/>
</dbReference>
<dbReference type="Antibodypedia" id="31353">
    <property type="antibodies" value="342 antibodies from 37 providers"/>
</dbReference>
<dbReference type="DNASU" id="1915"/>
<dbReference type="Ensembl" id="ENST00000309268.11">
    <property type="protein sequence ID" value="ENSP00000339053.4"/>
    <property type="gene ID" value="ENSG00000156508.19"/>
</dbReference>
<dbReference type="Ensembl" id="ENST00000316292.13">
    <property type="protein sequence ID" value="ENSP00000339063.7"/>
    <property type="gene ID" value="ENSG00000156508.19"/>
</dbReference>
<dbReference type="Ensembl" id="ENST00000331523.7">
    <property type="protein sequence ID" value="ENSP00000330054.2"/>
    <property type="gene ID" value="ENSG00000156508.19"/>
</dbReference>
<dbReference type="Ensembl" id="ENST00000356303.7">
    <property type="protein sequence ID" value="ENSP00000348651.3"/>
    <property type="gene ID" value="ENSG00000156508.19"/>
</dbReference>
<dbReference type="Ensembl" id="ENST00000455918.2">
    <property type="protein sequence ID" value="ENSP00000392366.2"/>
    <property type="gene ID" value="ENSG00000156508.19"/>
</dbReference>
<dbReference type="Ensembl" id="ENST00000615060.5">
    <property type="protein sequence ID" value="ENSP00000479055.2"/>
    <property type="gene ID" value="ENSG00000156508.19"/>
</dbReference>
<dbReference type="Ensembl" id="ENST00000676710.1">
    <property type="protein sequence ID" value="ENSP00000504335.1"/>
    <property type="gene ID" value="ENSG00000156508.19"/>
</dbReference>
<dbReference type="Ensembl" id="ENST00000677236.1">
    <property type="protein sequence ID" value="ENSP00000503192.1"/>
    <property type="gene ID" value="ENSG00000156508.19"/>
</dbReference>
<dbReference type="Ensembl" id="ENST00000678508.1">
    <property type="protein sequence ID" value="ENSP00000503249.1"/>
    <property type="gene ID" value="ENSG00000156508.19"/>
</dbReference>
<dbReference type="Ensembl" id="ENST00000678702.1">
    <property type="protein sequence ID" value="ENSP00000503823.1"/>
    <property type="gene ID" value="ENSG00000156508.19"/>
</dbReference>
<dbReference type="GeneID" id="1915"/>
<dbReference type="KEGG" id="hsa:1915"/>
<dbReference type="MANE-Select" id="ENST00000309268.11">
    <property type="protein sequence ID" value="ENSP00000339053.4"/>
    <property type="RefSeq nucleotide sequence ID" value="NM_001402.6"/>
    <property type="RefSeq protein sequence ID" value="NP_001393.1"/>
</dbReference>
<dbReference type="AGR" id="HGNC:3189"/>
<dbReference type="CTD" id="1915"/>
<dbReference type="DisGeNET" id="1915"/>
<dbReference type="GeneCards" id="EEF1A1"/>
<dbReference type="HGNC" id="HGNC:3189">
    <property type="gene designation" value="EEF1A1"/>
</dbReference>
<dbReference type="HPA" id="ENSG00000156508">
    <property type="expression patterns" value="Low tissue specificity"/>
</dbReference>
<dbReference type="MIM" id="130590">
    <property type="type" value="gene"/>
</dbReference>
<dbReference type="neXtProt" id="NX_P68104"/>
<dbReference type="OpenTargets" id="ENSG00000156508"/>
<dbReference type="PharmGKB" id="PA27625"/>
<dbReference type="VEuPathDB" id="HostDB:ENSG00000156508"/>
<dbReference type="eggNOG" id="KOG0052">
    <property type="taxonomic scope" value="Eukaryota"/>
</dbReference>
<dbReference type="GeneTree" id="ENSGT00950000183029"/>
<dbReference type="InParanoid" id="P68104"/>
<dbReference type="OMA" id="HEIRDEM"/>
<dbReference type="OrthoDB" id="9515202at2759"/>
<dbReference type="PAN-GO" id="P68104">
    <property type="GO annotations" value="4 GO annotations based on evolutionary models"/>
</dbReference>
<dbReference type="PhylomeDB" id="P68104"/>
<dbReference type="TreeFam" id="TF300304"/>
<dbReference type="PathwayCommons" id="P68104"/>
<dbReference type="Reactome" id="R-HSA-156842">
    <property type="pathway name" value="Eukaryotic Translation Elongation"/>
</dbReference>
<dbReference type="Reactome" id="R-HSA-156902">
    <property type="pathway name" value="Peptide chain elongation"/>
</dbReference>
<dbReference type="Reactome" id="R-HSA-3371511">
    <property type="pathway name" value="HSF1 activation"/>
</dbReference>
<dbReference type="Reactome" id="R-HSA-6798695">
    <property type="pathway name" value="Neutrophil degranulation"/>
</dbReference>
<dbReference type="Reactome" id="R-HSA-8876725">
    <property type="pathway name" value="Protein methylation"/>
</dbReference>
<dbReference type="Reactome" id="R-HSA-9613829">
    <property type="pathway name" value="Chaperone Mediated Autophagy"/>
</dbReference>
<dbReference type="Reactome" id="R-HSA-9735869">
    <property type="pathway name" value="SARS-CoV-1 modulates host translation machinery"/>
</dbReference>
<dbReference type="SignaLink" id="P68104"/>
<dbReference type="SIGNOR" id="P68104"/>
<dbReference type="BioGRID-ORCS" id="1915">
    <property type="hits" value="746 hits in 1099 CRISPR screens"/>
</dbReference>
<dbReference type="CD-CODE" id="91857CE7">
    <property type="entry name" value="Nucleolus"/>
</dbReference>
<dbReference type="CD-CODE" id="FB4E32DD">
    <property type="entry name" value="Presynaptic clusters and postsynaptic densities"/>
</dbReference>
<dbReference type="ChiTaRS" id="EEF1A1">
    <property type="organism name" value="human"/>
</dbReference>
<dbReference type="GeneWiki" id="Eukaryotic_translation_elongation_factor_1_alpha_1"/>
<dbReference type="GenomeRNAi" id="1915"/>
<dbReference type="Pharos" id="P68104">
    <property type="development level" value="Tchem"/>
</dbReference>
<dbReference type="PRO" id="PR:P68104"/>
<dbReference type="Proteomes" id="UP000005640">
    <property type="component" value="Chromosome 6"/>
</dbReference>
<dbReference type="RNAct" id="P68104">
    <property type="molecule type" value="protein"/>
</dbReference>
<dbReference type="Bgee" id="ENSG00000156508">
    <property type="expression patterns" value="Expressed in ganglionic eminence and 193 other cell types or tissues"/>
</dbReference>
<dbReference type="ExpressionAtlas" id="P68104">
    <property type="expression patterns" value="baseline and differential"/>
</dbReference>
<dbReference type="GO" id="GO:0030864">
    <property type="term" value="C:cortical actin cytoskeleton"/>
    <property type="evidence" value="ECO:0000314"/>
    <property type="project" value="UniProtKB"/>
</dbReference>
<dbReference type="GO" id="GO:0005737">
    <property type="term" value="C:cytoplasm"/>
    <property type="evidence" value="ECO:0000314"/>
    <property type="project" value="UniProtKB"/>
</dbReference>
<dbReference type="GO" id="GO:0098574">
    <property type="term" value="C:cytoplasmic side of lysosomal membrane"/>
    <property type="evidence" value="ECO:0000303"/>
    <property type="project" value="ParkinsonsUK-UCL"/>
</dbReference>
<dbReference type="GO" id="GO:0005829">
    <property type="term" value="C:cytosol"/>
    <property type="evidence" value="ECO:0000314"/>
    <property type="project" value="UniProtKB"/>
</dbReference>
<dbReference type="GO" id="GO:0022626">
    <property type="term" value="C:cytosolic ribosome"/>
    <property type="evidence" value="ECO:0000314"/>
    <property type="project" value="UniProt"/>
</dbReference>
<dbReference type="GO" id="GO:0005853">
    <property type="term" value="C:eukaryotic translation elongation factor 1 complex"/>
    <property type="evidence" value="ECO:0000304"/>
    <property type="project" value="UniProtKB"/>
</dbReference>
<dbReference type="GO" id="GO:0070062">
    <property type="term" value="C:extracellular exosome"/>
    <property type="evidence" value="ECO:0007005"/>
    <property type="project" value="UniProtKB"/>
</dbReference>
<dbReference type="GO" id="GO:0005576">
    <property type="term" value="C:extracellular region"/>
    <property type="evidence" value="ECO:0000304"/>
    <property type="project" value="Reactome"/>
</dbReference>
<dbReference type="GO" id="GO:0005615">
    <property type="term" value="C:extracellular space"/>
    <property type="evidence" value="ECO:0007005"/>
    <property type="project" value="UniProtKB"/>
</dbReference>
<dbReference type="GO" id="GO:1904813">
    <property type="term" value="C:ficolin-1-rich granule lumen"/>
    <property type="evidence" value="ECO:0000304"/>
    <property type="project" value="Reactome"/>
</dbReference>
<dbReference type="GO" id="GO:0016020">
    <property type="term" value="C:membrane"/>
    <property type="evidence" value="ECO:0007005"/>
    <property type="project" value="UniProtKB"/>
</dbReference>
<dbReference type="GO" id="GO:0005730">
    <property type="term" value="C:nucleolus"/>
    <property type="evidence" value="ECO:0000314"/>
    <property type="project" value="UniProtKB"/>
</dbReference>
<dbReference type="GO" id="GO:0005634">
    <property type="term" value="C:nucleus"/>
    <property type="evidence" value="ECO:0000314"/>
    <property type="project" value="UniProtKB"/>
</dbReference>
<dbReference type="GO" id="GO:0005886">
    <property type="term" value="C:plasma membrane"/>
    <property type="evidence" value="ECO:0000314"/>
    <property type="project" value="UniProtKB"/>
</dbReference>
<dbReference type="GO" id="GO:0005840">
    <property type="term" value="C:ribosome"/>
    <property type="evidence" value="ECO:0000314"/>
    <property type="project" value="UniProt"/>
</dbReference>
<dbReference type="GO" id="GO:0032587">
    <property type="term" value="C:ruffle membrane"/>
    <property type="evidence" value="ECO:0000314"/>
    <property type="project" value="UniProtKB"/>
</dbReference>
<dbReference type="GO" id="GO:0034774">
    <property type="term" value="C:secretory granule lumen"/>
    <property type="evidence" value="ECO:0000304"/>
    <property type="project" value="Reactome"/>
</dbReference>
<dbReference type="GO" id="GO:0005525">
    <property type="term" value="F:GTP binding"/>
    <property type="evidence" value="ECO:0000304"/>
    <property type="project" value="UniProtKB"/>
</dbReference>
<dbReference type="GO" id="GO:0003924">
    <property type="term" value="F:GTPase activity"/>
    <property type="evidence" value="ECO:0000314"/>
    <property type="project" value="UniProtKB"/>
</dbReference>
<dbReference type="GO" id="GO:0019209">
    <property type="term" value="F:kinase activator activity"/>
    <property type="evidence" value="ECO:0000314"/>
    <property type="project" value="UniProtKB"/>
</dbReference>
<dbReference type="GO" id="GO:0019900">
    <property type="term" value="F:kinase binding"/>
    <property type="evidence" value="ECO:0000353"/>
    <property type="project" value="UniProtKB"/>
</dbReference>
<dbReference type="GO" id="GO:0060090">
    <property type="term" value="F:molecular adaptor activity"/>
    <property type="evidence" value="ECO:0000314"/>
    <property type="project" value="UniProtKB"/>
</dbReference>
<dbReference type="GO" id="GO:0019901">
    <property type="term" value="F:protein kinase binding"/>
    <property type="evidence" value="ECO:0000353"/>
    <property type="project" value="UniProtKB"/>
</dbReference>
<dbReference type="GO" id="GO:0003723">
    <property type="term" value="F:RNA binding"/>
    <property type="evidence" value="ECO:0007005"/>
    <property type="project" value="UniProtKB"/>
</dbReference>
<dbReference type="GO" id="GO:0003746">
    <property type="term" value="F:translation elongation factor activity"/>
    <property type="evidence" value="ECO:0000314"/>
    <property type="project" value="UniProtKB"/>
</dbReference>
<dbReference type="GO" id="GO:0000049">
    <property type="term" value="F:tRNA binding"/>
    <property type="evidence" value="ECO:0000314"/>
    <property type="project" value="UniProtKB"/>
</dbReference>
<dbReference type="GO" id="GO:0071364">
    <property type="term" value="P:cellular response to epidermal growth factor stimulus"/>
    <property type="evidence" value="ECO:0000314"/>
    <property type="project" value="UniProtKB"/>
</dbReference>
<dbReference type="GO" id="GO:0044829">
    <property type="term" value="P:positive regulation by host of viral genome replication"/>
    <property type="evidence" value="ECO:0000314"/>
    <property type="project" value="UniProtKB"/>
</dbReference>
<dbReference type="GO" id="GO:1904714">
    <property type="term" value="P:regulation of chaperone-mediated autophagy"/>
    <property type="evidence" value="ECO:0000303"/>
    <property type="project" value="ParkinsonsUK-UCL"/>
</dbReference>
<dbReference type="GO" id="GO:0006412">
    <property type="term" value="P:translation"/>
    <property type="evidence" value="ECO:0000318"/>
    <property type="project" value="GO_Central"/>
</dbReference>
<dbReference type="GO" id="GO:0006414">
    <property type="term" value="P:translational elongation"/>
    <property type="evidence" value="ECO:0000314"/>
    <property type="project" value="UniProtKB"/>
</dbReference>
<dbReference type="CDD" id="cd01883">
    <property type="entry name" value="EF1_alpha"/>
    <property type="match status" value="1"/>
</dbReference>
<dbReference type="CDD" id="cd03693">
    <property type="entry name" value="EF1_alpha_II"/>
    <property type="match status" value="1"/>
</dbReference>
<dbReference type="CDD" id="cd03705">
    <property type="entry name" value="EF1_alpha_III"/>
    <property type="match status" value="1"/>
</dbReference>
<dbReference type="FunFam" id="2.40.30.10:FF:000005">
    <property type="entry name" value="Elongation factor 1-alpha"/>
    <property type="match status" value="1"/>
</dbReference>
<dbReference type="FunFam" id="3.40.50.300:FF:000090">
    <property type="entry name" value="Elongation factor 1-alpha"/>
    <property type="match status" value="1"/>
</dbReference>
<dbReference type="FunFam" id="2.40.30.10:FF:000168">
    <property type="entry name" value="Elongation factor 1-alpha 2"/>
    <property type="match status" value="1"/>
</dbReference>
<dbReference type="Gene3D" id="3.40.50.300">
    <property type="entry name" value="P-loop containing nucleotide triphosphate hydrolases"/>
    <property type="match status" value="1"/>
</dbReference>
<dbReference type="Gene3D" id="2.40.30.10">
    <property type="entry name" value="Translation factors"/>
    <property type="match status" value="2"/>
</dbReference>
<dbReference type="HAMAP" id="MF_00118_A">
    <property type="entry name" value="EF_Tu_A"/>
    <property type="match status" value="1"/>
</dbReference>
<dbReference type="InterPro" id="IPR004161">
    <property type="entry name" value="EFTu-like_2"/>
</dbReference>
<dbReference type="InterPro" id="IPR031157">
    <property type="entry name" value="G_TR_CS"/>
</dbReference>
<dbReference type="InterPro" id="IPR054696">
    <property type="entry name" value="GTP-eEF1A_C"/>
</dbReference>
<dbReference type="InterPro" id="IPR027417">
    <property type="entry name" value="P-loop_NTPase"/>
</dbReference>
<dbReference type="InterPro" id="IPR000795">
    <property type="entry name" value="T_Tr_GTP-bd_dom"/>
</dbReference>
<dbReference type="InterPro" id="IPR050100">
    <property type="entry name" value="TRAFAC_GTPase_members"/>
</dbReference>
<dbReference type="InterPro" id="IPR009000">
    <property type="entry name" value="Transl_B-barrel_sf"/>
</dbReference>
<dbReference type="InterPro" id="IPR009001">
    <property type="entry name" value="Transl_elong_EF1A/Init_IF2_C"/>
</dbReference>
<dbReference type="InterPro" id="IPR004539">
    <property type="entry name" value="Transl_elong_EF1A_euk/arc"/>
</dbReference>
<dbReference type="NCBIfam" id="TIGR00483">
    <property type="entry name" value="EF-1_alpha"/>
    <property type="match status" value="1"/>
</dbReference>
<dbReference type="NCBIfam" id="NF008969">
    <property type="entry name" value="PRK12317.1"/>
    <property type="match status" value="1"/>
</dbReference>
<dbReference type="PANTHER" id="PTHR23115">
    <property type="entry name" value="TRANSLATION FACTOR"/>
    <property type="match status" value="1"/>
</dbReference>
<dbReference type="Pfam" id="PF22594">
    <property type="entry name" value="GTP-eEF1A_C"/>
    <property type="match status" value="1"/>
</dbReference>
<dbReference type="Pfam" id="PF00009">
    <property type="entry name" value="GTP_EFTU"/>
    <property type="match status" value="1"/>
</dbReference>
<dbReference type="Pfam" id="PF03144">
    <property type="entry name" value="GTP_EFTU_D2"/>
    <property type="match status" value="1"/>
</dbReference>
<dbReference type="PRINTS" id="PR00315">
    <property type="entry name" value="ELONGATNFCT"/>
</dbReference>
<dbReference type="SUPFAM" id="SSF50465">
    <property type="entry name" value="EF-Tu/eEF-1alpha/eIF2-gamma C-terminal domain"/>
    <property type="match status" value="1"/>
</dbReference>
<dbReference type="SUPFAM" id="SSF52540">
    <property type="entry name" value="P-loop containing nucleoside triphosphate hydrolases"/>
    <property type="match status" value="1"/>
</dbReference>
<dbReference type="SUPFAM" id="SSF50447">
    <property type="entry name" value="Translation proteins"/>
    <property type="match status" value="1"/>
</dbReference>
<dbReference type="PROSITE" id="PS00301">
    <property type="entry name" value="G_TR_1"/>
    <property type="match status" value="1"/>
</dbReference>
<dbReference type="PROSITE" id="PS51722">
    <property type="entry name" value="G_TR_2"/>
    <property type="match status" value="1"/>
</dbReference>
<feature type="initiator methionine" description="Removed" evidence="18">
    <location>
        <position position="1"/>
    </location>
</feature>
<feature type="chain" id="PRO_0000090885" description="Elongation factor 1-alpha 1">
    <location>
        <begin position="2"/>
        <end position="462"/>
    </location>
</feature>
<feature type="domain" description="tr-type G">
    <location>
        <begin position="5"/>
        <end position="242"/>
    </location>
</feature>
<feature type="region of interest" description="G1" evidence="4">
    <location>
        <begin position="14"/>
        <end position="21"/>
    </location>
</feature>
<feature type="region of interest" description="G2" evidence="4">
    <location>
        <begin position="70"/>
        <end position="74"/>
    </location>
</feature>
<feature type="region of interest" description="G3" evidence="4">
    <location>
        <begin position="91"/>
        <end position="94"/>
    </location>
</feature>
<feature type="region of interest" description="G4" evidence="4">
    <location>
        <begin position="153"/>
        <end position="156"/>
    </location>
</feature>
<feature type="region of interest" description="G5" evidence="4">
    <location>
        <begin position="194"/>
        <end position="196"/>
    </location>
</feature>
<feature type="binding site" evidence="3">
    <location>
        <begin position="14"/>
        <end position="21"/>
    </location>
    <ligand>
        <name>GTP</name>
        <dbReference type="ChEBI" id="CHEBI:37565"/>
    </ligand>
</feature>
<feature type="binding site" evidence="3">
    <location>
        <begin position="153"/>
        <end position="156"/>
    </location>
    <ligand>
        <name>GTP</name>
        <dbReference type="ChEBI" id="CHEBI:37565"/>
    </ligand>
</feature>
<feature type="binding site" evidence="3">
    <location>
        <begin position="194"/>
        <end position="196"/>
    </location>
    <ligand>
        <name>GTP</name>
        <dbReference type="ChEBI" id="CHEBI:37565"/>
    </ligand>
</feature>
<feature type="modified residue" description="N,N,N-trimethylglycine" evidence="18 23">
    <location>
        <position position="2"/>
    </location>
</feature>
<feature type="modified residue" description="N6,N6,N6-trimethyllysine; alternate; by EEF1AKMT4" evidence="22">
    <location>
        <position position="36"/>
    </location>
</feature>
<feature type="modified residue" description="N6,N6-dimethyllysine; alternate; by EEF1AKMT4" evidence="22">
    <location>
        <position position="36"/>
    </location>
</feature>
<feature type="modified residue" description="N6-methyllysine; alternate; by EEF1AKMT4" evidence="22">
    <location>
        <position position="36"/>
    </location>
</feature>
<feature type="modified residue" description="N6,N6-dimethyllysine" evidence="23 24 31">
    <location>
        <position position="55"/>
    </location>
</feature>
<feature type="modified residue" description="N6,N6,N6-trimethyllysine; by EEF1AKMT1" evidence="18">
    <location>
        <position position="79"/>
    </location>
</feature>
<feature type="modified residue" description="N6,N6,N6-trimethyllysine; alternate; by EEF1AKMT3" evidence="21">
    <location>
        <position position="165"/>
    </location>
</feature>
<feature type="modified residue" description="N6,N6-dimethyllysine; alternate; by EEF1AKMT3" evidence="21 31">
    <location>
        <position position="165"/>
    </location>
</feature>
<feature type="modified residue" description="N6-acetyllysine; alternate" evidence="1">
    <location>
        <position position="165"/>
    </location>
</feature>
<feature type="modified residue" description="N6-methyllysine; alternate; by EEF1AKMT3" evidence="21">
    <location>
        <position position="165"/>
    </location>
</feature>
<feature type="modified residue" description="N6-acetyllysine" evidence="1">
    <location>
        <position position="172"/>
    </location>
</feature>
<feature type="modified residue" description="N6-acetyllysine" evidence="1">
    <location>
        <position position="273"/>
    </location>
</feature>
<feature type="modified residue" description="Phosphoserine; by TGFBR1" evidence="14">
    <location>
        <position position="300"/>
    </location>
</feature>
<feature type="modified residue" description="5-glutamyl glycerylphosphorylethanolamine" evidence="16">
    <location>
        <position position="301"/>
    </location>
</feature>
<feature type="modified residue" description="N6,N6,N6-trimethyllysine; by EEF1AKMT2" evidence="15">
    <location>
        <position position="318"/>
    </location>
</feature>
<feature type="modified residue" description="5-glutamyl glycerylphosphorylethanolamine" evidence="16">
    <location>
        <position position="374"/>
    </location>
</feature>
<feature type="modified residue" description="N6-acetyllysine; alternate" evidence="1">
    <location>
        <position position="392"/>
    </location>
</feature>
<feature type="modified residue" description="N6-succinyllysine; alternate" evidence="1">
    <location>
        <position position="392"/>
    </location>
</feature>
<feature type="modified residue" description="Phosphothreonine; by PASK" evidence="9">
    <location>
        <position position="432"/>
    </location>
</feature>
<feature type="modified residue" description="N6-acetyllysine" evidence="1">
    <location>
        <position position="439"/>
    </location>
</feature>
<feature type="cross-link" description="Glycyl lysine isopeptide (Lys-Gly) (interchain with G-Cter in ubiquitin)" evidence="28">
    <location>
        <position position="385"/>
    </location>
</feature>
<feature type="mutagenesis site" description="No effect on methylation by EEF1AKMT2. Abolishes EEF1AKMT4-mediated methylation." evidence="15 22">
    <original>K</original>
    <variation>R</variation>
    <location>
        <position position="36"/>
    </location>
</feature>
<feature type="mutagenesis site" description="No effect on methylation by EEF1AKMT2. Abolishes methylation by METTL13." evidence="15 23 24">
    <original>K</original>
    <variation>R</variation>
    <location>
        <position position="55"/>
    </location>
</feature>
<feature type="mutagenesis site" description="No effect on methylation by EEF1AKMT2." evidence="15">
    <original>K</original>
    <variation>R</variation>
    <location>
        <position position="79"/>
    </location>
</feature>
<feature type="mutagenesis site" description="Abolishes methylation by EEF1AKMT3." evidence="21">
    <original>K</original>
    <variation>A</variation>
    <location>
        <position position="165"/>
    </location>
</feature>
<feature type="mutagenesis site" description="No effect on methylation by EEF1AKMT2." evidence="15">
    <original>K</original>
    <variation>R</variation>
    <location>
        <position position="165"/>
    </location>
</feature>
<feature type="mutagenesis site" description="Abolishes methylation by EEF1AKMT2." evidence="15">
    <original>K</original>
    <variation>R</variation>
    <location>
        <position position="318"/>
    </location>
</feature>
<feature type="mutagenesis site" description="Impaired ubiquitination in response to ribosome stalling caused by ternatin-4." evidence="28">
    <original>K</original>
    <variation>R</variation>
    <location>
        <position position="385"/>
    </location>
</feature>
<feature type="mutagenesis site" description="Resistant to inhibition by plitidepsin and ternatin-4. No effect on SARS-CoV-2 proteins translation." evidence="20 25 27">
    <original>A</original>
    <variation>V</variation>
    <location>
        <position position="399"/>
    </location>
</feature>
<feature type="mutagenesis site" description="Abolishes phosphorylation by PASK." evidence="9">
    <original>T</original>
    <variation>A</variation>
    <location>
        <position position="432"/>
    </location>
</feature>
<feature type="sequence conflict" description="In Ref. 6; CAA27325." evidence="32" ref="6">
    <original>S</original>
    <variation>A</variation>
    <location>
        <position position="83"/>
    </location>
</feature>
<feature type="sequence conflict" description="In Ref. 3; CAA34756." evidence="32" ref="3">
    <original>L</original>
    <variation>V</variation>
    <location>
        <position position="232"/>
    </location>
</feature>
<reference key="1">
    <citation type="journal article" date="1986" name="Eur. J. Biochem.">
        <title>The primary structure of the alpha subunit of human elongation factor 1. Structural aspects of guanine-nucleotide-binding sites.</title>
        <authorList>
            <person name="Brands J.H.G.M."/>
            <person name="Maassen J.A."/>
            <person name="van Hemert F.J."/>
            <person name="Amons R."/>
            <person name="Moeller W."/>
        </authorList>
    </citation>
    <scope>NUCLEOTIDE SEQUENCE [MRNA]</scope>
</reference>
<reference key="2">
    <citation type="journal article" date="1989" name="J. Biol. Chem.">
        <title>Isolation and characterization of the human chromosomal gene for polypeptide chain elongation factor-1 alpha.</title>
        <authorList>
            <person name="Uetsuki T."/>
            <person name="Naito A."/>
            <person name="Nagata S."/>
            <person name="Kaziro Y."/>
        </authorList>
    </citation>
    <scope>NUCLEOTIDE SEQUENCE [GENOMIC DNA]</scope>
</reference>
<reference key="3">
    <citation type="journal article" date="1990" name="Nucleic Acids Res.">
        <title>Retropseudogenes constitute the major part of the human elongation factor 1 alpha gene family.</title>
        <authorList>
            <person name="Madsen H.O."/>
            <person name="Poulsen K."/>
            <person name="Dahl O."/>
            <person name="Clark B.F.C."/>
            <person name="Hjorth J.P."/>
        </authorList>
    </citation>
    <scope>NUCLEOTIDE SEQUENCE [MRNA]</scope>
    <source>
        <tissue>Liver</tissue>
    </source>
</reference>
<reference key="4">
    <citation type="submission" date="2001-07" db="EMBL/GenBank/DDBJ databases">
        <title>Postnatal expression of a novel mRNA isoform from the human elongation factor-1a gene.</title>
        <authorList>
            <person name="Shimazu T."/>
            <person name="Koike K."/>
        </authorList>
    </citation>
    <scope>NUCLEOTIDE SEQUENCE [MRNA]</scope>
</reference>
<reference key="5">
    <citation type="journal article" date="2004" name="Genome Res.">
        <title>The status, quality, and expansion of the NIH full-length cDNA project: the Mammalian Gene Collection (MGC).</title>
        <authorList>
            <consortium name="The MGC Project Team"/>
        </authorList>
    </citation>
    <scope>NUCLEOTIDE SEQUENCE [LARGE SCALE MRNA]</scope>
    <source>
        <tissue>B-cell</tissue>
        <tissue>Bone marrow</tissue>
        <tissue>Cervix</tissue>
        <tissue>Colon</tissue>
        <tissue>Hippocampus</tissue>
        <tissue>Kidney</tissue>
        <tissue>Lung</tissue>
        <tissue>Lymph</tissue>
        <tissue>Mammary gland</tissue>
        <tissue>Ovary</tissue>
        <tissue>Pancreas</tissue>
        <tissue>Placenta</tissue>
        <tissue>Testis</tissue>
        <tissue>Uterus</tissue>
    </source>
</reference>
<reference key="6">
    <citation type="journal article" date="1986" name="Nucleic Acids Res.">
        <title>Structure of the amino-terminal end of mammalian elongation factor Tu.</title>
        <authorList>
            <person name="Rao T.R."/>
            <person name="Slobin L.I."/>
        </authorList>
    </citation>
    <scope>NUCLEOTIDE SEQUENCE [MRNA] OF 1-94</scope>
</reference>
<reference key="7">
    <citation type="submission" date="2010-01" db="UniProtKB">
        <authorList>
            <person name="Bienvenut W.V."/>
            <person name="Zebisch A."/>
            <person name="Kolch W."/>
        </authorList>
    </citation>
    <scope>PROTEIN SEQUENCE OF 6-30; 52-62; 85-96; 101-129; 135-180; 248-313; 396-423 AND 431-439</scope>
    <scope>METHYLATION AT LYS-55 AND LYS-165</scope>
    <scope>IDENTIFICATION BY MASS SPECTROMETRY</scope>
    <source>
        <tissue>Colon carcinoma</tissue>
        <tissue>Ovarian carcinoma</tissue>
    </source>
</reference>
<reference key="8">
    <citation type="journal article" date="2007" name="Clin. Exp. Immunol.">
        <title>Txk, a member of the non-receptor tyrosine kinase of the Tec family, forms a complex with poly(ADP-ribose) polymerase 1 and elongation factor 1alpha and regulates interferon-gamma gene transcription in Th1 cells.</title>
        <authorList>
            <person name="Maruyama T."/>
            <person name="Nara K."/>
            <person name="Yoshikawa H."/>
            <person name="Suzuki N."/>
        </authorList>
    </citation>
    <scope>PROTEIN SEQUENCE OF 7-16 AND 85-96</scope>
    <scope>FUNCTION</scope>
    <scope>INTERACTION WITH PARP1</scope>
    <scope>PHOSPHORYLATION BY TXK</scope>
    <scope>SUBCELLULAR LOCATION</scope>
</reference>
<reference key="9">
    <citation type="submission" date="2005-06" db="UniProtKB">
        <authorList>
            <person name="Bienvenut W.V."/>
        </authorList>
    </citation>
    <scope>PROTEIN SEQUENCE OF 38-44; 70-79; 85-96; 135-172; 248-290; 386-392 AND 428-439</scope>
    <source>
        <tissue>B-cell lymphoma</tissue>
    </source>
</reference>
<reference key="10">
    <citation type="journal article" date="1988" name="J. Biol. Chem.">
        <title>Retinol-regulated gene expression in human tracheobronchial epithelial cells. Enhanced expression of elongation factor EF-1 alpha.</title>
        <authorList>
            <person name="Ann D.K."/>
            <person name="Wu M.M.J."/>
            <person name="Huang T."/>
            <person name="Carlson D.M."/>
            <person name="Wu R."/>
        </authorList>
    </citation>
    <scope>NUCLEOTIDE SEQUENCE [MRNA] OF 138-462</scope>
</reference>
<reference key="11">
    <citation type="journal article" date="1989" name="J. Biol. Chem.">
        <title>Murine elongation factor 1 alpha (EF-1 alpha) is posttranslationally modified by novel amide-linked ethanolamine-phosphoglycerol moieties. Addition of ethanolamine-phosphoglycerol to specific glutamic acid residues on EF-1 alpha.</title>
        <authorList>
            <person name="Whiteheart S.W."/>
            <person name="Shenbagarmurthi P."/>
            <person name="Chen L."/>
            <person name="Cotter R.J."/>
            <person name="Hart G.W."/>
        </authorList>
    </citation>
    <scope>ETHANOLAMINYLATION AT GLU-301 AND GLU-374</scope>
</reference>
<reference key="12">
    <citation type="journal article" date="1996" name="Science">
        <title>Binding of zinc finger protein ZPR1 to the epidermal growth factor receptor.</title>
        <authorList>
            <person name="Galcheva-Gargova Z."/>
            <person name="Konstantinov K.N."/>
            <person name="Wu I.-H."/>
            <person name="Klier F.G."/>
            <person name="Barrett T."/>
            <person name="Davis R.J."/>
        </authorList>
    </citation>
    <scope>INTERACTION WITH ZPR1</scope>
    <scope>SUBCELLULAR LOCATION</scope>
</reference>
<reference key="13">
    <citation type="journal article" date="1998" name="J. Biol. Chem.">
        <title>Induction of acute translational response genes by homocysteine. Elongation factors-1alpha, -beta, and -delta.</title>
        <authorList>
            <person name="Chacko G."/>
            <person name="Ling Q."/>
            <person name="Hajjar K.A."/>
        </authorList>
    </citation>
    <scope>INDUCTION BY HOMOCYSTEINE</scope>
</reference>
<reference key="14">
    <citation type="journal article" date="2002" name="EMBO J.">
        <title>Exp5 exports eEF1A via tRNA from nuclei and synergizes with other transport pathways to confine translation to the cytoplasm.</title>
        <authorList>
            <person name="Bohnsack M.T."/>
            <person name="Regener K."/>
            <person name="Schwappach B."/>
            <person name="Saffrich R."/>
            <person name="Paraskeva E."/>
            <person name="Hartmann E."/>
            <person name="Goerlich D."/>
        </authorList>
    </citation>
    <scope>IDENTIFICATION IN A NUCLEAR EXPORT RECEPTOR COMPLEX WITH XPO5; RAN AND TRNA</scope>
    <scope>INTERACTION WITH XPO5</scope>
</reference>
<reference key="15">
    <citation type="journal article" date="2002" name="EMBO J.">
        <title>Exportin-5-mediated nuclear export of eukaryotic elongation factor 1A and tRNA.</title>
        <authorList>
            <person name="Calado A."/>
            <person name="Treichel N."/>
            <person name="Mueller E.-C."/>
            <person name="Otto A."/>
            <person name="Kutay U."/>
        </authorList>
    </citation>
    <scope>IDENTIFICATION IN A NUCLEAR EXPORT RECEPTOR COMPLEX WITH XPO5; RAN AND TRNA</scope>
    <scope>INTERACTION WITH XPO5</scope>
</reference>
<reference key="16">
    <citation type="journal article" date="2005" name="Biochem. Biophys. Res. Commun.">
        <title>Proteomic identification of proteins conjugated to ISG15 in mouse and human cells.</title>
        <authorList>
            <person name="Giannakopoulos N.V."/>
            <person name="Luo J.K."/>
            <person name="Papov V."/>
            <person name="Zou W."/>
            <person name="Lenschow D.J."/>
            <person name="Jacobs B.S."/>
            <person name="Borden E.C."/>
            <person name="Li J."/>
            <person name="Virgin H.W."/>
            <person name="Zhang D.E."/>
        </authorList>
    </citation>
    <scope>ISGYLATION</scope>
</reference>
<reference key="17">
    <citation type="journal article" date="2007" name="Cell. Physiol. Biochem.">
        <title>Male germ cell expression of the PAS domain kinase PASKIN and its novel target eukaryotic translation elongation factor eEF1A1.</title>
        <authorList>
            <person name="Eckhardt K."/>
            <person name="Troger J."/>
            <person name="Reissmann J."/>
            <person name="Katschinski D.M."/>
            <person name="Wagner K.F."/>
            <person name="Stengel P."/>
            <person name="Paasch U."/>
            <person name="Hunziker P."/>
            <person name="Borter E."/>
            <person name="Barth S."/>
            <person name="Schlafli P."/>
            <person name="Spielmann P."/>
            <person name="Stiehl D.P."/>
            <person name="Camenisch G."/>
            <person name="Wenger R.H."/>
        </authorList>
    </citation>
    <scope>PHOSPHORYLATION AT THR-432</scope>
    <scope>MUTAGENESIS OF THR-432</scope>
</reference>
<reference key="18">
    <citation type="journal article" date="2008" name="Biochem. Biophys. Res. Commun.">
        <title>Lysyl-tRNA synthetase interacts with EF1alpha, aspartyl-tRNA synthetase and p38 in vitro.</title>
        <authorList>
            <person name="Guzzo C.M."/>
            <person name="Yang D.C.H."/>
        </authorList>
    </citation>
    <scope>INTERACTION WITH KARS1</scope>
</reference>
<reference key="19">
    <citation type="journal article" date="2008" name="Biochim. Biophys. Acta">
        <title>The possible interaction of CDA14 and protein elongation factor 1alpha.</title>
        <authorList>
            <person name="Yang Y.F."/>
            <person name="Chou M.Y."/>
            <person name="Fan C.Y."/>
            <person name="Chen S.F."/>
            <person name="Lyu P.C."/>
            <person name="Liu C.C."/>
            <person name="Tseng T.L."/>
        </authorList>
    </citation>
    <scope>INTERACTION WITH ERGIC2</scope>
</reference>
<reference key="20">
    <citation type="journal article" date="2008" name="J. Biol. Chem.">
        <title>Eukaryotic elongation factor 1A interacts with sphingosine kinase and directly enhances its catalytic activity.</title>
        <authorList>
            <person name="Leclercq T.M."/>
            <person name="Moretti P.A."/>
            <person name="Vadas M.A."/>
            <person name="Pitson S.M."/>
        </authorList>
    </citation>
    <scope>INTERACTION WITH SPHK1 AND SPHK2</scope>
</reference>
<reference key="21">
    <citation type="journal article" date="2009" name="J. Cell Sci.">
        <title>The SAM domain of the RhoGAP DLC1 binds EF1A1 to regulate cell migration.</title>
        <authorList>
            <person name="Zhong D."/>
            <person name="Zhang J."/>
            <person name="Yang S."/>
            <person name="Soh U.J."/>
            <person name="Buschdorf J.P."/>
            <person name="Zhou Y.T."/>
            <person name="Yang D."/>
            <person name="Low B.C."/>
        </authorList>
    </citation>
    <scope>INTERACTION WITH DLC1</scope>
    <scope>SUBCELLULAR LOCATION</scope>
</reference>
<reference key="22">
    <citation type="journal article" date="2010" name="Curr. Biol.">
        <title>Phosphorylation of eEF1A1 at Ser300 by TbetaR-I results in inhibition of mRNA translation.</title>
        <authorList>
            <person name="Lin K.W."/>
            <person name="Yakymovych I."/>
            <person name="Jia M."/>
            <person name="Yakymovych M."/>
            <person name="Souchelnytskyi S."/>
        </authorList>
    </citation>
    <scope>PHOSPHORYLATION AT SER-300</scope>
</reference>
<reference key="23">
    <citation type="journal article" date="2014" name="PLoS ONE">
        <title>Selenium-based S-adenosylmethionine analog reveals the mammalian seven-beta-strand methyltransferase METTL10 to be an EF1A1 lysine methyltransferase.</title>
        <authorList>
            <person name="Shimazu T."/>
            <person name="Barjau J."/>
            <person name="Sohtome Y."/>
            <person name="Sodeoka M."/>
            <person name="Shinkai Y."/>
        </authorList>
    </citation>
    <scope>METHYLATION AT LYS-318</scope>
    <scope>MUTAGENESIS OF LYS-36; LYS-55; LYS-79; LYS-165 AND LYS-318</scope>
</reference>
<reference key="24">
    <citation type="journal article" date="2015" name="Elife">
        <title>Ternatin and improved synthetic variants kill cancer cells by targeting the elongation factor-1A ternary complex.</title>
        <authorList>
            <person name="Carelli J.D."/>
            <person name="Sethofer S.G."/>
            <person name="Smith G.A."/>
            <person name="Miller H.R."/>
            <person name="Simard J.L."/>
            <person name="Merrick W.C."/>
            <person name="Jain R.K."/>
            <person name="Ross N.T."/>
            <person name="Taunton J."/>
        </authorList>
    </citation>
    <scope>FUNCTION</scope>
    <scope>ACTIVITY REGULATION</scope>
    <scope>MUTAGENESIS OF ALA-399</scope>
</reference>
<reference key="25">
    <citation type="journal article" date="2015" name="Int. J. Biochem. Cell Biol.">
        <title>Elongation factor-1A1 is a novel substrate of the protein phosphatase 1-TIMAP complex.</title>
        <authorList>
            <person name="Boratko A."/>
            <person name="Peter M."/>
            <person name="Thalwieser Z."/>
            <person name="Kovacs E."/>
            <person name="Csortos C."/>
        </authorList>
    </citation>
    <scope>SUBCELLULAR LOCATION</scope>
    <scope>INTERACTION WITH PPP1R16B</scope>
    <scope>PHOSPHORYLATION BY ROCK2</scope>
</reference>
<reference key="26">
    <citation type="journal article" date="2015" name="Mol. Cell">
        <title>Functional dynamics within the human ribosome regulate the rate of active protein synthesis.</title>
        <authorList>
            <person name="Ferguson A."/>
            <person name="Wang L."/>
            <person name="Altman R.B."/>
            <person name="Terry D.S."/>
            <person name="Juette M.F."/>
            <person name="Burnett B.J."/>
            <person name="Alejo J.L."/>
            <person name="Dass R.A."/>
            <person name="Parks M.M."/>
            <person name="Vincent C.T."/>
            <person name="Blanchard S.C."/>
        </authorList>
    </citation>
    <scope>FUNCTION</scope>
    <scope>CATALYTIC ACTIVITY</scope>
</reference>
<reference key="27">
    <citation type="journal article" date="2016" name="Mol. Cell. Proteomics">
        <title>Novel N-terminal and lysine methyltransferases that target translation elongation factor 1A in yeast and human.</title>
        <authorList>
            <person name="Hamey J.J."/>
            <person name="Winter D.L."/>
            <person name="Yagoub D."/>
            <person name="Overall C.M."/>
            <person name="Hart-Smith G."/>
            <person name="Wilkins M.R."/>
        </authorList>
    </citation>
    <scope>METHYLATION AT GLY-2 AND LYS-79</scope>
</reference>
<reference key="28">
    <citation type="journal article" date="2017" name="Nucleic Acids Res.">
        <title>The novel lysine specific methyltransferase METTL21B affects mRNA translation through inducible and dynamic methylation of Lys-165 in human eukaryotic elongation factor 1 alpha (eEF1A).</title>
        <authorList>
            <person name="Malecki J."/>
            <person name="Aileni V.K."/>
            <person name="Ho A.Y."/>
            <person name="Schwarz J."/>
            <person name="Moen A."/>
            <person name="Soerensen V."/>
            <person name="Nilges B.S."/>
            <person name="Jakobsson M.E."/>
            <person name="Leidel S.A."/>
            <person name="Falnes P.O."/>
        </authorList>
    </citation>
    <scope>METHYLATION AT LYS-165</scope>
    <scope>MUTAGENESIS OF LYS-165</scope>
</reference>
<reference key="29">
    <citation type="journal article" date="2017" name="Nucleic Acids Res.">
        <title>Methylation of human eukaryotic elongation factor alpha (eEF1A) by a member of a novel protein lysine methyltransferase family modulates mRNA translation.</title>
        <authorList>
            <person name="Jakobsson M.E."/>
            <person name="Malecki J."/>
            <person name="Nilges B.S."/>
            <person name="Moen A."/>
            <person name="Leidel S.A."/>
            <person name="Falnes P.O."/>
        </authorList>
    </citation>
    <scope>METHYLATION AT LYS-36</scope>
    <scope>IDENTIFICATION BY MASS SPECTROMETRY</scope>
    <scope>MUTAGENESIS OF LYS-36</scope>
</reference>
<reference key="30">
    <citation type="journal article" date="2018" name="Cell">
        <title>METTL13 methylation of eEF1A increases translational output to promote tumorigenesis.</title>
        <authorList>
            <person name="Liu S."/>
            <person name="Hausmann S."/>
            <person name="Carlson S.M."/>
            <person name="Fuentes M.E."/>
            <person name="Francis J.W."/>
            <person name="Pillai R."/>
            <person name="Lofgren S.M."/>
            <person name="Hulea L."/>
            <person name="Tandoc K."/>
            <person name="Lu J."/>
            <person name="Li A."/>
            <person name="Nguyen N.D."/>
            <person name="Caporicci M."/>
            <person name="Kim M.P."/>
            <person name="Maitra A."/>
            <person name="Wang H."/>
            <person name="Wistuba I.I."/>
            <person name="Porco J.A. Jr."/>
            <person name="Bassik M.C."/>
            <person name="Elias J.E."/>
            <person name="Song J."/>
            <person name="Topisirovic I."/>
            <person name="Van Rechem C."/>
            <person name="Mazur P.K."/>
            <person name="Gozani O."/>
        </authorList>
    </citation>
    <scope>METHYLATION AT LYS-55 BY METTL13</scope>
    <scope>MUTAGENESIS OF LYS-55</scope>
</reference>
<reference key="31">
    <citation type="journal article" date="2018" name="Nat. Commun.">
        <title>The dual methyltransferase METTL13 targets N terminus and Lys55 of eEF1A and modulates codon-specific translation rates.</title>
        <authorList>
            <person name="Jakobsson M.E."/>
            <person name="Malecki J.M."/>
            <person name="Halabelian L."/>
            <person name="Nilges B.S."/>
            <person name="Pinto R."/>
            <person name="Kudithipudi S."/>
            <person name="Munk S."/>
            <person name="Davydova E."/>
            <person name="Zuhairi F.R."/>
            <person name="Arrowsmith C.H."/>
            <person name="Jeltsch A."/>
            <person name="Leidel S.A."/>
            <person name="Olsen J.V."/>
            <person name="Falnes P.O."/>
        </authorList>
    </citation>
    <scope>METHYLATION AT GLY-2 AND LYS-55 BY METTL13</scope>
    <scope>MUTAGENESIS OF LYS-55</scope>
</reference>
<reference key="32">
    <citation type="journal article" date="2021" name="Science">
        <title>Plitidepsin has potent preclinical efficacy against SARS-CoV-2 by targeting the host protein eEF1A.</title>
        <authorList>
            <person name="White K.M."/>
            <person name="Rosales R."/>
            <person name="Yildiz S."/>
            <person name="Kehrer T."/>
            <person name="Miorin L."/>
            <person name="Moreno E."/>
            <person name="Jangra S."/>
            <person name="Uccellini M.B."/>
            <person name="Rathnasinghe R."/>
            <person name="Coughlan L."/>
            <person name="Martinez-Romero C."/>
            <person name="Batra J."/>
            <person name="Rojc A."/>
            <person name="Bouhaddou M."/>
            <person name="Fabius J.M."/>
            <person name="Obernier K."/>
            <person name="Dejosez M."/>
            <person name="Guillen M.J."/>
            <person name="Losada A."/>
            <person name="Aviles P."/>
            <person name="Schotsaert M."/>
            <person name="Zwaka T."/>
            <person name="Vignuzzi M."/>
            <person name="Shokat K.M."/>
            <person name="Krogan N.J."/>
            <person name="Garcia-Sastre A."/>
        </authorList>
    </citation>
    <scope>FUNCTION (MICROBIAL INFECTION)</scope>
    <scope>ACTIVITY REGULATION</scope>
    <scope>MUTAGENESIS OF ALA-399</scope>
</reference>
<reference key="33">
    <citation type="journal article" date="2022" name="Elife">
        <title>Didemnin B and ternatin-4 differentially inhibit conformational changes in eEF1A required for aminoacyl-tRNA accommodation into mammalian ribosomes.</title>
        <authorList>
            <person name="Juette M.F."/>
            <person name="Carelli J.D."/>
            <person name="Rundlet E.J."/>
            <person name="Brown A."/>
            <person name="Shao S."/>
            <person name="Ferguson A."/>
            <person name="Wasserman M.R."/>
            <person name="Holm M."/>
            <person name="Taunton J."/>
            <person name="Blanchard S.C."/>
        </authorList>
    </citation>
    <scope>FUNCTION</scope>
    <scope>ACTIVITY REGULATION</scope>
    <scope>MUTAGENESIS OF ALA-399</scope>
</reference>
<reference key="34">
    <citation type="journal article" date="2022" name="Nat. Chem.">
        <title>Synthesis and single-molecule imaging reveal stereospecific enhancement of binding kinetics by the antitumour eEF1A antagonist SR-A3.</title>
        <authorList>
            <person name="Wang H.Y."/>
            <person name="Yang H."/>
            <person name="Holm M."/>
            <person name="Tom H."/>
            <person name="Oltion K."/>
            <person name="Al-Khdhairawi A.A.Q."/>
            <person name="Weber J.F."/>
            <person name="Blanchard S.C."/>
            <person name="Ruggero D."/>
            <person name="Taunton J."/>
        </authorList>
    </citation>
    <scope>FUNCTION</scope>
    <scope>ACTIVITY REGULATION</scope>
</reference>
<reference key="35">
    <citation type="journal article" date="2023" name="Cell">
        <title>An E3 ligase network engages GCN1 to promote the degradation of translation factors on stalled ribosomes.</title>
        <authorList>
            <person name="Oltion K."/>
            <person name="Carelli J.D."/>
            <person name="Yang T."/>
            <person name="See S.K."/>
            <person name="Wang H.Y."/>
            <person name="Kampmann M."/>
            <person name="Taunton J."/>
        </authorList>
    </citation>
    <scope>FUNCTION</scope>
    <scope>ACTIVITY REGULATION</scope>
    <scope>UBIQUITINATION AT LYS-385</scope>
    <scope>MUTAGENESIS OF LYS-385</scope>
</reference>
<accession>P68104</accession>
<accession>P04719</accession>
<accession>P04720</accession>
<accession>Q6IQ15</accession>
<sequence>MGKEKTHINIVVIGHVDSGKSTTTGHLIYKCGGIDKRTIEKFEKEAAEMGKGSFKYAWVLDKLKAERERGITIDISLWKFETSKYYVTIIDAPGHRDFIKNMITGTSQADCAVLIVAAGVGEFEAGISKNGQTREHALLAYTLGVKQLIVGVNKMDSTEPPYSQKRYEEIVKEVSTYIKKIGYNPDTVAFVPISGWNGDNMLEPSANMPWFKGWKVTRKDGNASGTTLLEALDCILPPTRPTDKPLRLPLQDVYKIGGIGTVPVGRVETGVLKPGMVVTFAPVNVTTEVKSVEMHHEALSEALPGDNVGFNVKNVSVKDVRRGNVAGDSKNDPPMEAAGFTAQVIILNHPGQISAGYAPVLDCHTAHIACKFAELKEKIDRRSGKKLEDGPKFLKSGDAAIVDMVPGKPMCVESFSDYPPLGRFAVRDMRQTVAVGVIKAVDKKAAGAGKVTKSAQKAQKAK</sequence>
<evidence type="ECO:0000250" key="1">
    <source>
        <dbReference type="UniProtKB" id="P10126"/>
    </source>
</evidence>
<evidence type="ECO:0000250" key="2">
    <source>
        <dbReference type="UniProtKB" id="P62630"/>
    </source>
</evidence>
<evidence type="ECO:0000250" key="3">
    <source>
        <dbReference type="UniProtKB" id="P68105"/>
    </source>
</evidence>
<evidence type="ECO:0000255" key="4"/>
<evidence type="ECO:0000269" key="5">
    <source>
    </source>
</evidence>
<evidence type="ECO:0000269" key="6">
    <source>
    </source>
</evidence>
<evidence type="ECO:0000269" key="7">
    <source>
    </source>
</evidence>
<evidence type="ECO:0000269" key="8">
    <source>
    </source>
</evidence>
<evidence type="ECO:0000269" key="9">
    <source>
    </source>
</evidence>
<evidence type="ECO:0000269" key="10">
    <source>
    </source>
</evidence>
<evidence type="ECO:0000269" key="11">
    <source>
    </source>
</evidence>
<evidence type="ECO:0000269" key="12">
    <source>
    </source>
</evidence>
<evidence type="ECO:0000269" key="13">
    <source>
    </source>
</evidence>
<evidence type="ECO:0000269" key="14">
    <source>
    </source>
</evidence>
<evidence type="ECO:0000269" key="15">
    <source>
    </source>
</evidence>
<evidence type="ECO:0000269" key="16">
    <source>
    </source>
</evidence>
<evidence type="ECO:0000269" key="17">
    <source>
    </source>
</evidence>
<evidence type="ECO:0000269" key="18">
    <source>
    </source>
</evidence>
<evidence type="ECO:0000269" key="19">
    <source>
    </source>
</evidence>
<evidence type="ECO:0000269" key="20">
    <source>
    </source>
</evidence>
<evidence type="ECO:0000269" key="21">
    <source>
    </source>
</evidence>
<evidence type="ECO:0000269" key="22">
    <source>
    </source>
</evidence>
<evidence type="ECO:0000269" key="23">
    <source>
    </source>
</evidence>
<evidence type="ECO:0000269" key="24">
    <source>
    </source>
</evidence>
<evidence type="ECO:0000269" key="25">
    <source>
    </source>
</evidence>
<evidence type="ECO:0000269" key="26">
    <source>
    </source>
</evidence>
<evidence type="ECO:0000269" key="27">
    <source>
    </source>
</evidence>
<evidence type="ECO:0000269" key="28">
    <source>
    </source>
</evidence>
<evidence type="ECO:0000269" key="29">
    <source>
    </source>
</evidence>
<evidence type="ECO:0000269" key="30">
    <source>
    </source>
</evidence>
<evidence type="ECO:0000269" key="31">
    <source ref="7"/>
</evidence>
<evidence type="ECO:0000305" key="32"/>
<evidence type="ECO:0000305" key="33">
    <source>
    </source>
</evidence>
<name>EF1A1_HUMAN</name>
<comment type="function">
    <text evidence="3 8 19 20 26 27 28">Translation elongation factor that catalyzes the GTP-dependent binding of aminoacyl-tRNA (aa-tRNA) to the A-site of ribosomes during the elongation phase of protein synthesis (PubMed:26593721, PubMed:26651998, PubMed:36123449, PubMed:36264623, PubMed:36638793). Base pairing between the mRNA codon and the aa-tRNA anticodon promotes GTP hydrolysis, releasing the aa-tRNA from EEF1A1 and allowing its accommodation into the ribosome (PubMed:26593721, PubMed:26651998, PubMed:36123449, PubMed:36264623, PubMed:36638793). The growing protein chain is subsequently transferred from the P-site peptidyl tRNA to the A-site aa-tRNA, extending it by one amino acid through ribosome-catalyzed peptide bond formation (PubMed:26593721, PubMed:26651998, PubMed:36123449, PubMed:36264623). Also plays a role in the positive regulation of IFNG transcription in T-helper 1 cells as part of an IFNG promoter-binding complex with TXK and PARP1 (PubMed:17177976). Also plays a role in cytoskeleton organization by promoting actin bundling (By similarity).</text>
</comment>
<comment type="function">
    <text evidence="25">(Microbial infection) Required for the translation of viral proteins and viral replication during human coronavirus SARS-CoV-2 infection.</text>
</comment>
<comment type="catalytic activity">
    <reaction evidence="33">
        <text>GTP + H2O = GDP + phosphate + H(+)</text>
        <dbReference type="Rhea" id="RHEA:19669"/>
        <dbReference type="ChEBI" id="CHEBI:15377"/>
        <dbReference type="ChEBI" id="CHEBI:15378"/>
        <dbReference type="ChEBI" id="CHEBI:37565"/>
        <dbReference type="ChEBI" id="CHEBI:43474"/>
        <dbReference type="ChEBI" id="CHEBI:58189"/>
    </reaction>
    <physiologicalReaction direction="left-to-right" evidence="33">
        <dbReference type="Rhea" id="RHEA:19670"/>
    </physiologicalReaction>
</comment>
<comment type="activity regulation">
    <text evidence="20 25 26 27 28">Inhibited by plitidepsin, a chemical compound extracted from the ascidian Aplidium albicans (PubMed:33495306). Specifically inhibited by didemnin B, a natural product that triggers ribosome stalling by preventing aminoacyl-tRNA (aa-tRNA) release from EEF1A1 on the ribosome (PubMed:26651998, PubMed:36264623). Specifically inhibited by ternatin-4, a small-molecule inhibitor that triggers ribosome stalling by traping EEF1A1 on the ribosome and preventing aminoacyl-tRNA (aa-tRNA) accommodation (PubMed:26651998, PubMed:36123449, PubMed:36264623, PubMed:36638793). Ribosome stalling by ternatin-4 causes ubiquitination and degradation of EEF1A1 (PubMed:36638793). Specifically inhibited by ternatin SR-A3, which differs from ternatin-4 by the addition of a single oxygen atom into the side chain of N-Me-Leu (PubMed:36123449). Inhibition by ternatin-4 can be reversed, while it is not the case for didemnin B (PubMed:36264623).</text>
</comment>
<comment type="subunit">
    <text evidence="1 2 5 6 8 10 11 12 13 17 29">Found in a nuclear export complex with XPO5, EEF1A1, Ran and aminoacylated tRNA (PubMed:12426392, PubMed:12426393). Interacts with PARP1 (PubMed:17177976). Interacts with KARS1 (PubMed:18029264). May interact with ERGIC2 (PubMed:17980171). Interacts with IFIT1 (via TPR repeats 4-7) (By similarity). Interacts with DLC1, facilitating distribution to the membrane periphery and ruffles upon growth factor stimulation (PubMed:19158340). Interacts with ZPR1; the interaction occurs in a epidermal growth factor (EGF)-dependent manner (PubMed:8650580). Interacts with PPP1R16B (PubMed:26497934). Interacts with SPHK1 and SPHK2; both interactions increase SPHK1 and SPHK2 kinase activity (PubMed:18263879). Interacts with guanyl-nucleotide exchange factor EEF1B2 (By similarity). Interacts (via middle-region) with HTATIP2 (via N-terminus); the interaction is direct and competes with EEF1A1 binding to guanyl-nucleotide exchange factor EEF1B2, thereby inhibiting GDP for GTP exchange and reactivation of EEF1A1 (By similarity). Interacts with tRNA (By similarity).</text>
</comment>
<comment type="interaction">
    <interactant intactId="EBI-352162">
        <id>P68104</id>
    </interactant>
    <interactant intactId="EBI-1805484">
        <id>Q8NFJ9</id>
        <label>BBS1</label>
    </interactant>
    <organismsDiffer>false</organismsDiffer>
    <experiments>3</experiments>
</comment>
<comment type="interaction">
    <interactant intactId="EBI-352162">
        <id>P68104</id>
    </interactant>
    <interactant intactId="EBI-18924329">
        <id>Q96IK1-2</id>
        <label>BOD1</label>
    </interactant>
    <organismsDiffer>false</organismsDiffer>
    <experiments>3</experiments>
</comment>
<comment type="interaction">
    <interactant intactId="EBI-352162">
        <id>P68104</id>
    </interactant>
    <interactant intactId="EBI-73946">
        <id>Q16539</id>
        <label>MAPK14</label>
    </interactant>
    <organismsDiffer>false</organismsDiffer>
    <experiments>3</experiments>
</comment>
<comment type="interaction">
    <interactant intactId="EBI-352162">
        <id>P68104</id>
    </interactant>
    <interactant intactId="EBI-389668">
        <id>Q00987</id>
        <label>MDM2</label>
    </interactant>
    <organismsDiffer>false</organismsDiffer>
    <experiments>9</experiments>
</comment>
<comment type="interaction">
    <interactant intactId="EBI-352162">
        <id>P68104</id>
    </interactant>
    <interactant intactId="EBI-16423037">
        <id>Q9NZ94-2</id>
        <label>NLGN3</label>
    </interactant>
    <organismsDiffer>false</organismsDiffer>
    <experiments>4</experiments>
</comment>
<comment type="interaction">
    <interactant intactId="EBI-352162">
        <id>P68104</id>
    </interactant>
    <interactant intactId="EBI-358311">
        <id>P12004</id>
        <label>PCNA</label>
    </interactant>
    <organismsDiffer>false</organismsDiffer>
    <experiments>2</experiments>
</comment>
<comment type="interaction">
    <interactant intactId="EBI-352162">
        <id>P68104</id>
    </interactant>
    <interactant intactId="EBI-746453">
        <id>P54725</id>
        <label>RAD23A</label>
    </interactant>
    <organismsDiffer>false</organismsDiffer>
    <experiments>2</experiments>
</comment>
<comment type="interaction">
    <interactant intactId="EBI-352162">
        <id>P68104</id>
    </interactant>
    <interactant intactId="EBI-985303">
        <id>Q9NYA1</id>
        <label>SPHK1</label>
    </interactant>
    <organismsDiffer>false</organismsDiffer>
    <experiments>2</experiments>
</comment>
<comment type="interaction">
    <interactant intactId="EBI-352162">
        <id>P68104</id>
    </interactant>
    <interactant intactId="EBI-923010">
        <id>Q14166</id>
        <label>TTLL12</label>
    </interactant>
    <organismsDiffer>false</organismsDiffer>
    <experiments>7</experiments>
</comment>
<comment type="interaction">
    <interactant intactId="EBI-352162">
        <id>P68104</id>
    </interactant>
    <interactant intactId="EBI-347088">
        <id>P63104</id>
        <label>YWHAZ</label>
    </interactant>
    <organismsDiffer>false</organismsDiffer>
    <experiments>2</experiments>
</comment>
<comment type="interaction">
    <interactant intactId="EBI-352162">
        <id>P68104</id>
    </interactant>
    <interactant intactId="EBI-711925">
        <id>Q05516</id>
        <label>ZBTB16</label>
    </interactant>
    <organismsDiffer>false</organismsDiffer>
    <experiments>4</experiments>
</comment>
<comment type="interaction">
    <interactant intactId="EBI-352162">
        <id>P68104</id>
    </interactant>
    <interactant intactId="EBI-524753">
        <id>Q8IUH5</id>
        <label>ZDHHC17</label>
    </interactant>
    <organismsDiffer>false</organismsDiffer>
    <experiments>2</experiments>
</comment>
<comment type="subcellular location">
    <subcellularLocation>
        <location evidence="13 29">Cytoplasm</location>
    </subcellularLocation>
    <subcellularLocation>
        <location evidence="8 29">Nucleus</location>
    </subcellularLocation>
    <subcellularLocation>
        <location evidence="29">Nucleus</location>
        <location evidence="29">Nucleolus</location>
    </subcellularLocation>
    <subcellularLocation>
        <location evidence="17">Cell membrane</location>
    </subcellularLocation>
    <text evidence="13 17 29">Colocalizes with DLC1 at actin-rich regions in the cell periphery (PubMed:19158340). Translocates together with ZPR1 from the cytoplasm to the nucleus and nucleolus after treatment with mitogens (PubMed:8650580). Localization at the cell membrane depends on EEF1A1 phosphorylation status and the presence of PPP1R16B (PubMed:26497934).</text>
</comment>
<comment type="induction">
    <text evidence="30">By homocysteine (HC), may mediate accelerated synthesis of free thiol-containing proteins in response to HC-induced oxidative stress.</text>
</comment>
<comment type="PTM">
    <text evidence="7">ISGylated.</text>
</comment>
<comment type="PTM">
    <text evidence="8 9 14 17">Phosphorylated by TXK (PubMed:17177976). Phosphorylation by PASK increases translation efficiency (PubMed:17595531). Phosphorylated by ROCK2 (PubMed:26497934). Phosphorylation by TGFBR1 inhibits translation elongation (PubMed:20832312).</text>
</comment>
<comment type="PTM">
    <text evidence="15 18 21 22 23 24">Trimethylated at Lys-79 by EEF1AKMT1 (PubMed:26545399). Methylated at Lys-165 by EEF1AKMT3, methylation by EEF1AKMT3 is dynamic as well as inducible by stress conditions, such as ER-stress, and plays a regulatory role on mRNA translation (PubMed:28108655). Trimethylated at Lys-318 by EEF1AKMT2 (PubMed:25144183). Mono-, di-, and trimethylated at Lys-36 by EEF1AKMT4; trimethylated form is predominant. Methylation by EEF1AKMT4 contributes to the fine-tuning of translation rates for a subset of tRNAs (PubMed:28520920). Trimethylated at Gly-2 by METTL13 (PubMed:30143613). Mono- and dimethylated at Lys-55 by METTL13; dimethylated form is predominant (PubMed:30143613, PubMed:30612740).</text>
</comment>
<comment type="PTM">
    <text evidence="28">Ubiquitinated at Lys-385 by RNF14 in response to ribosome collisions (ribosome stalling), leading to its degradation by the proteasome and rescue of stalled ribosomes.</text>
</comment>
<comment type="similarity">
    <text evidence="32">Belongs to the TRAFAC class translation factor GTPase superfamily. Classic translation factor GTPase family. EF-Tu/EF-1A subfamily.</text>
</comment>
<comment type="sequence caution" evidence="32">
    <conflict type="erroneous initiation">
        <sequence resource="EMBL-CDS" id="AAA52367"/>
    </conflict>
    <text>Extended N-terminus.</text>
</comment>
<comment type="sequence caution" evidence="32">
    <conflict type="miscellaneous discrepancy">
        <sequence resource="EMBL-CDS" id="AAH71619"/>
    </conflict>
    <text>Probable cloning artifact.</text>
</comment>
<comment type="online information" name="Atlas of Genetics and Cytogenetics in Oncology and Haematology">
    <link uri="https://atlasgeneticsoncology.org/gene/40407/EEF1A1"/>
</comment>
<organism>
    <name type="scientific">Homo sapiens</name>
    <name type="common">Human</name>
    <dbReference type="NCBI Taxonomy" id="9606"/>
    <lineage>
        <taxon>Eukaryota</taxon>
        <taxon>Metazoa</taxon>
        <taxon>Chordata</taxon>
        <taxon>Craniata</taxon>
        <taxon>Vertebrata</taxon>
        <taxon>Euteleostomi</taxon>
        <taxon>Mammalia</taxon>
        <taxon>Eutheria</taxon>
        <taxon>Euarchontoglires</taxon>
        <taxon>Primates</taxon>
        <taxon>Haplorrhini</taxon>
        <taxon>Catarrhini</taxon>
        <taxon>Hominidae</taxon>
        <taxon>Homo</taxon>
    </lineage>
</organism>
<gene>
    <name type="primary">EEF1A1</name>
    <name type="synonym">EEF1A</name>
    <name type="synonym">EF1A</name>
    <name type="synonym">LENG7</name>
</gene>
<protein>
    <recommendedName>
        <fullName>Elongation factor 1-alpha 1</fullName>
        <shortName>EF-1-alpha-1</shortName>
        <ecNumber evidence="33">3.6.5.-</ecNumber>
    </recommendedName>
    <alternativeName>
        <fullName>Elongation factor Tu</fullName>
        <shortName>EF-Tu</shortName>
    </alternativeName>
    <alternativeName>
        <fullName>Eukaryotic elongation factor 1 A-1</fullName>
        <shortName>eEF1A-1</shortName>
    </alternativeName>
    <alternativeName>
        <fullName>Leukocyte receptor cluster member 7</fullName>
    </alternativeName>
</protein>
<keyword id="KW-0002">3D-structure</keyword>
<keyword id="KW-0007">Acetylation</keyword>
<keyword id="KW-1003">Cell membrane</keyword>
<keyword id="KW-0963">Cytoplasm</keyword>
<keyword id="KW-0903">Direct protein sequencing</keyword>
<keyword id="KW-0251">Elongation factor</keyword>
<keyword id="KW-0342">GTP-binding</keyword>
<keyword id="KW-0945">Host-virus interaction</keyword>
<keyword id="KW-0378">Hydrolase</keyword>
<keyword id="KW-1017">Isopeptide bond</keyword>
<keyword id="KW-0472">Membrane</keyword>
<keyword id="KW-0488">Methylation</keyword>
<keyword id="KW-0547">Nucleotide-binding</keyword>
<keyword id="KW-0539">Nucleus</keyword>
<keyword id="KW-0597">Phosphoprotein</keyword>
<keyword id="KW-0648">Protein biosynthesis</keyword>
<keyword id="KW-1267">Proteomics identification</keyword>
<keyword id="KW-1185">Reference proteome</keyword>
<keyword id="KW-0804">Transcription</keyword>
<keyword id="KW-0805">Transcription regulation</keyword>
<keyword id="KW-0832">Ubl conjugation</keyword>
<proteinExistence type="evidence at protein level"/>